<feature type="chain" id="PRO_1000018027" description="Arginine--tRNA ligase">
    <location>
        <begin position="1"/>
        <end position="601"/>
    </location>
</feature>
<feature type="short sequence motif" description="'HIGH' region">
    <location>
        <begin position="133"/>
        <end position="143"/>
    </location>
</feature>
<dbReference type="EC" id="6.1.1.19" evidence="1"/>
<dbReference type="EMBL" id="AM398681">
    <property type="protein sequence ID" value="CAL43571.1"/>
    <property type="molecule type" value="Genomic_DNA"/>
</dbReference>
<dbReference type="RefSeq" id="WP_011963616.1">
    <property type="nucleotide sequence ID" value="NC_009613.3"/>
</dbReference>
<dbReference type="RefSeq" id="YP_001296380.1">
    <property type="nucleotide sequence ID" value="NC_009613.3"/>
</dbReference>
<dbReference type="SMR" id="A6GZP8"/>
<dbReference type="STRING" id="402612.FP1498"/>
<dbReference type="EnsemblBacteria" id="CAL43571">
    <property type="protein sequence ID" value="CAL43571"/>
    <property type="gene ID" value="FP1498"/>
</dbReference>
<dbReference type="KEGG" id="fps:FP1498"/>
<dbReference type="PATRIC" id="fig|402612.5.peg.1512"/>
<dbReference type="eggNOG" id="COG0018">
    <property type="taxonomic scope" value="Bacteria"/>
</dbReference>
<dbReference type="HOGENOM" id="CLU_006406_6_1_10"/>
<dbReference type="OrthoDB" id="9805987at2"/>
<dbReference type="Proteomes" id="UP000006394">
    <property type="component" value="Chromosome"/>
</dbReference>
<dbReference type="GO" id="GO:0005737">
    <property type="term" value="C:cytoplasm"/>
    <property type="evidence" value="ECO:0007669"/>
    <property type="project" value="UniProtKB-SubCell"/>
</dbReference>
<dbReference type="GO" id="GO:0004814">
    <property type="term" value="F:arginine-tRNA ligase activity"/>
    <property type="evidence" value="ECO:0007669"/>
    <property type="project" value="UniProtKB-UniRule"/>
</dbReference>
<dbReference type="GO" id="GO:0005524">
    <property type="term" value="F:ATP binding"/>
    <property type="evidence" value="ECO:0007669"/>
    <property type="project" value="UniProtKB-UniRule"/>
</dbReference>
<dbReference type="GO" id="GO:0006420">
    <property type="term" value="P:arginyl-tRNA aminoacylation"/>
    <property type="evidence" value="ECO:0007669"/>
    <property type="project" value="UniProtKB-UniRule"/>
</dbReference>
<dbReference type="FunFam" id="1.10.730.10:FF:000006">
    <property type="entry name" value="Arginyl-tRNA synthetase 2, mitochondrial"/>
    <property type="match status" value="1"/>
</dbReference>
<dbReference type="Gene3D" id="3.30.1360.70">
    <property type="entry name" value="Arginyl tRNA synthetase N-terminal domain"/>
    <property type="match status" value="1"/>
</dbReference>
<dbReference type="Gene3D" id="3.40.50.620">
    <property type="entry name" value="HUPs"/>
    <property type="match status" value="1"/>
</dbReference>
<dbReference type="Gene3D" id="1.10.730.10">
    <property type="entry name" value="Isoleucyl-tRNA Synthetase, Domain 1"/>
    <property type="match status" value="1"/>
</dbReference>
<dbReference type="HAMAP" id="MF_00123">
    <property type="entry name" value="Arg_tRNA_synth"/>
    <property type="match status" value="1"/>
</dbReference>
<dbReference type="InterPro" id="IPR001412">
    <property type="entry name" value="aa-tRNA-synth_I_CS"/>
</dbReference>
<dbReference type="InterPro" id="IPR001278">
    <property type="entry name" value="Arg-tRNA-ligase"/>
</dbReference>
<dbReference type="InterPro" id="IPR005148">
    <property type="entry name" value="Arg-tRNA-synth_N"/>
</dbReference>
<dbReference type="InterPro" id="IPR036695">
    <property type="entry name" value="Arg-tRNA-synth_N_sf"/>
</dbReference>
<dbReference type="InterPro" id="IPR035684">
    <property type="entry name" value="ArgRS_core"/>
</dbReference>
<dbReference type="InterPro" id="IPR008909">
    <property type="entry name" value="DALR_anticod-bd"/>
</dbReference>
<dbReference type="InterPro" id="IPR014729">
    <property type="entry name" value="Rossmann-like_a/b/a_fold"/>
</dbReference>
<dbReference type="InterPro" id="IPR009080">
    <property type="entry name" value="tRNAsynth_Ia_anticodon-bd"/>
</dbReference>
<dbReference type="NCBIfam" id="TIGR00456">
    <property type="entry name" value="argS"/>
    <property type="match status" value="1"/>
</dbReference>
<dbReference type="PANTHER" id="PTHR11956:SF5">
    <property type="entry name" value="ARGININE--TRNA LIGASE, CYTOPLASMIC"/>
    <property type="match status" value="1"/>
</dbReference>
<dbReference type="PANTHER" id="PTHR11956">
    <property type="entry name" value="ARGINYL-TRNA SYNTHETASE"/>
    <property type="match status" value="1"/>
</dbReference>
<dbReference type="Pfam" id="PF05746">
    <property type="entry name" value="DALR_1"/>
    <property type="match status" value="1"/>
</dbReference>
<dbReference type="Pfam" id="PF00750">
    <property type="entry name" value="tRNA-synt_1d"/>
    <property type="match status" value="1"/>
</dbReference>
<dbReference type="PRINTS" id="PR01038">
    <property type="entry name" value="TRNASYNTHARG"/>
</dbReference>
<dbReference type="SMART" id="SM01016">
    <property type="entry name" value="Arg_tRNA_synt_N"/>
    <property type="match status" value="1"/>
</dbReference>
<dbReference type="SMART" id="SM00836">
    <property type="entry name" value="DALR_1"/>
    <property type="match status" value="1"/>
</dbReference>
<dbReference type="SUPFAM" id="SSF47323">
    <property type="entry name" value="Anticodon-binding domain of a subclass of class I aminoacyl-tRNA synthetases"/>
    <property type="match status" value="1"/>
</dbReference>
<dbReference type="SUPFAM" id="SSF55190">
    <property type="entry name" value="Arginyl-tRNA synthetase (ArgRS), N-terminal 'additional' domain"/>
    <property type="match status" value="1"/>
</dbReference>
<dbReference type="SUPFAM" id="SSF52374">
    <property type="entry name" value="Nucleotidylyl transferase"/>
    <property type="match status" value="1"/>
</dbReference>
<dbReference type="PROSITE" id="PS00178">
    <property type="entry name" value="AA_TRNA_LIGASE_I"/>
    <property type="match status" value="1"/>
</dbReference>
<sequence length="601" mass="67873">MSLQEILNPSIKTAIHQLFDLTIEKIEFQSTRKEFDGDITMVIFPLLKLIKTPQATPNGAKLNPADLGNKIGNYLVENVAQVEAFNVVSGFLNIVIANDYYINFFNTIKTDAQFGFVSPSEHDKAIMVEYSSPNTNKPLHLGHVRNNLLGYSVAEIIKASGKKVYKTQIINDRGIHICKSMLAWQKFGHSETPETSGLKGDKLVGKYYVAFDKAYKVEIAELMLQGKTEEEAKKQAPIIIEAQQMLLDWEAGKPAVMALWKTMNQWVYDGFATTYKNLGVNFDSYYYESNTYLLGKEVVQIGLDKGVFEKDPDGSVWIDLTQDGLDRKIVLRSDGTAVYMTQDIGTAIQRVKDFSDVGGMVYTVGNEQDYHFRVLFLILKKLGFDWASSLYHLSYGMVELPSGKMKSREGTVVDADDLMEEMTSTAQKLSEDLGKLESYSEEEKAILYKTIGLGALKYYILKVDPKKSMMFNPEESVDFAGNTGPFIQYTYARIQSILRKANFDITVTISTKLHPKEKELIKQIEMYPEVIQHAAANHSPALIANYIYDLVKEYNSFYQTVSILGEEDNDKKVFRVQLSKKVADTIKTAFTLLGIDVPERM</sequence>
<name>SYR_FLAPJ</name>
<accession>A6GZP8</accession>
<reference key="1">
    <citation type="journal article" date="2007" name="Nat. Biotechnol.">
        <title>Complete genome sequence of the fish pathogen Flavobacterium psychrophilum.</title>
        <authorList>
            <person name="Duchaud E."/>
            <person name="Boussaha M."/>
            <person name="Loux V."/>
            <person name="Bernardet J.-F."/>
            <person name="Michel C."/>
            <person name="Kerouault B."/>
            <person name="Mondot S."/>
            <person name="Nicolas P."/>
            <person name="Bossy R."/>
            <person name="Caron C."/>
            <person name="Bessieres P."/>
            <person name="Gibrat J.-F."/>
            <person name="Claverol S."/>
            <person name="Dumetz F."/>
            <person name="Le Henaff M."/>
            <person name="Benmansour A."/>
        </authorList>
    </citation>
    <scope>NUCLEOTIDE SEQUENCE [LARGE SCALE GENOMIC DNA]</scope>
    <source>
        <strain>ATCC 49511 / DSM 21280 / CIP 103535 / JIP02/86</strain>
    </source>
</reference>
<evidence type="ECO:0000255" key="1">
    <source>
        <dbReference type="HAMAP-Rule" id="MF_00123"/>
    </source>
</evidence>
<keyword id="KW-0030">Aminoacyl-tRNA synthetase</keyword>
<keyword id="KW-0067">ATP-binding</keyword>
<keyword id="KW-0963">Cytoplasm</keyword>
<keyword id="KW-0436">Ligase</keyword>
<keyword id="KW-0547">Nucleotide-binding</keyword>
<keyword id="KW-0648">Protein biosynthesis</keyword>
<keyword id="KW-1185">Reference proteome</keyword>
<protein>
    <recommendedName>
        <fullName evidence="1">Arginine--tRNA ligase</fullName>
        <ecNumber evidence="1">6.1.1.19</ecNumber>
    </recommendedName>
    <alternativeName>
        <fullName evidence="1">Arginyl-tRNA synthetase</fullName>
        <shortName evidence="1">ArgRS</shortName>
    </alternativeName>
</protein>
<proteinExistence type="inferred from homology"/>
<organism>
    <name type="scientific">Flavobacterium psychrophilum (strain ATCC 49511 / DSM 21280 / CIP 103535 / JIP02/86)</name>
    <dbReference type="NCBI Taxonomy" id="402612"/>
    <lineage>
        <taxon>Bacteria</taxon>
        <taxon>Pseudomonadati</taxon>
        <taxon>Bacteroidota</taxon>
        <taxon>Flavobacteriia</taxon>
        <taxon>Flavobacteriales</taxon>
        <taxon>Flavobacteriaceae</taxon>
        <taxon>Flavobacterium</taxon>
    </lineage>
</organism>
<comment type="catalytic activity">
    <reaction evidence="1">
        <text>tRNA(Arg) + L-arginine + ATP = L-arginyl-tRNA(Arg) + AMP + diphosphate</text>
        <dbReference type="Rhea" id="RHEA:20301"/>
        <dbReference type="Rhea" id="RHEA-COMP:9658"/>
        <dbReference type="Rhea" id="RHEA-COMP:9673"/>
        <dbReference type="ChEBI" id="CHEBI:30616"/>
        <dbReference type="ChEBI" id="CHEBI:32682"/>
        <dbReference type="ChEBI" id="CHEBI:33019"/>
        <dbReference type="ChEBI" id="CHEBI:78442"/>
        <dbReference type="ChEBI" id="CHEBI:78513"/>
        <dbReference type="ChEBI" id="CHEBI:456215"/>
        <dbReference type="EC" id="6.1.1.19"/>
    </reaction>
</comment>
<comment type="subunit">
    <text evidence="1">Monomer.</text>
</comment>
<comment type="subcellular location">
    <subcellularLocation>
        <location evidence="1">Cytoplasm</location>
    </subcellularLocation>
</comment>
<comment type="similarity">
    <text evidence="1">Belongs to the class-I aminoacyl-tRNA synthetase family.</text>
</comment>
<gene>
    <name evidence="1" type="primary">argS</name>
    <name type="ordered locus">FP1498</name>
</gene>